<comment type="function">
    <text evidence="8">May influence large dense-core vesicle exocytosis in adrenal chromaffin cells.</text>
</comment>
<comment type="function">
    <molecule>Isoform 1</molecule>
    <text evidence="3 12">Strongly outwardly rectifying, electrogenic H(+)/Cl(-)exchanger which mediates the exchange of chloride ions against protons (PubMed:26342074). The CLC channel family contains both chloride channels and proton-coupled anion transporters that exchange chloride or another anion for protons (By similarity). The presence of conserved gating glutamate residues is typical for family members that function as antiporters (By similarity).</text>
</comment>
<comment type="function">
    <molecule>Isoform 2</molecule>
    <text evidence="7 11 12 13">Strongly outwardly rectifying, electrogenic H(+)/Cl(-)exchanger which mediates the exchange of chloride ions against protons (PubMed:24603049, PubMed:26342074, PubMed:28972156). Facilitates endosomal acidification and chloride accumulation in hepatocytes (PubMed:15504734).</text>
</comment>
<comment type="function">
    <molecule>Isoform 4</molecule>
    <text evidence="12">Strongly outwardly rectifying, electrogenic H(+)/Cl(-)exchanger which mediates the exchange of chloride ions against protons.</text>
</comment>
<comment type="activity regulation">
    <molecule>Isoform 2</molecule>
    <text evidence="11">Inhibited by Cd(2+).</text>
</comment>
<comment type="activity regulation">
    <molecule>Isoform 5</molecule>
    <text evidence="11">Inhibited by Cd(2+).</text>
</comment>
<comment type="subunit">
    <molecule>Isoform 1</molecule>
    <text evidence="13">Monomer and homodimer (PubMed:28972156). Forms heterodimers with CLCN4 (PubMed:28972156).</text>
</comment>
<comment type="subcellular location">
    <subcellularLocation>
        <location evidence="10">Cytoplasmic vesicle</location>
        <location evidence="10">Secretory vesicle membrane</location>
        <topology evidence="5">Multi-pass membrane protein</topology>
    </subcellularLocation>
</comment>
<comment type="subcellular location">
    <molecule>Isoform 1</molecule>
    <subcellularLocation>
        <location evidence="12 13">Lysosome membrane</location>
        <topology evidence="5">Multi-pass membrane protein</topology>
    </subcellularLocation>
    <subcellularLocation>
        <location evidence="13">Late endosome membrane</location>
        <topology evidence="5">Multi-pass membrane protein</topology>
    </subcellularLocation>
    <subcellularLocation>
        <location evidence="4">Cell membrane</location>
        <topology evidence="5">Multi-pass membrane protein</topology>
    </subcellularLocation>
    <subcellularLocation>
        <location evidence="3">Early endosome membrane</location>
        <topology evidence="5">Multi-pass membrane protein</topology>
    </subcellularLocation>
</comment>
<comment type="subcellular location">
    <molecule>Isoform 2</molecule>
    <subcellularLocation>
        <location evidence="9">Early endosome membrane</location>
        <topology evidence="5">Multi-pass membrane protein</topology>
    </subcellularLocation>
    <subcellularLocation>
        <location evidence="12 13">Lysosome membrane</location>
        <topology evidence="5">Multi-pass membrane protein</topology>
    </subcellularLocation>
    <subcellularLocation>
        <location evidence="9 13">Late endosome membrane</location>
        <topology evidence="5">Multi-pass membrane protein</topology>
    </subcellularLocation>
</comment>
<comment type="subcellular location">
    <molecule>Isoform 4</molecule>
    <subcellularLocation>
        <location evidence="12">Cell membrane</location>
        <topology evidence="5">Multi-pass membrane protein</topology>
    </subcellularLocation>
    <subcellularLocation>
        <location evidence="12 13">Recycling endosome membrane</location>
        <topology evidence="5">Multi-pass membrane protein</topology>
    </subcellularLocation>
</comment>
<comment type="subcellular location">
    <molecule>Isoform 5</molecule>
    <subcellularLocation>
        <location evidence="11">Cell membrane</location>
        <topology evidence="5">Multi-pass membrane protein</topology>
    </subcellularLocation>
</comment>
<comment type="alternative products">
    <event type="alternative splicing"/>
    <isoform>
        <id>P51791-1</id>
        <name>1</name>
        <name evidence="16">b</name>
        <sequence type="displayed"/>
    </isoform>
    <isoform>
        <id>P51791-2</id>
        <name>2</name>
        <name evidence="15 16">a</name>
        <sequence type="described" ref="VSP_036899"/>
    </isoform>
    <isoform>
        <id>P51791-3</id>
        <name>3</name>
        <name evidence="16">e</name>
        <sequence type="described" ref="VSP_060628"/>
    </isoform>
    <isoform>
        <id>P51791-4</id>
        <name>4</name>
        <name evidence="16">c</name>
        <sequence type="described" ref="VSP_060627"/>
    </isoform>
    <isoform>
        <id>P51791-5</id>
        <name>5</name>
        <name evidence="15">d</name>
        <sequence type="described" ref="VSP_036899 VSP_060628"/>
    </isoform>
</comment>
<comment type="tissue specificity">
    <text evidence="10 14">Detected in kidney, in the apical part of proximal tubule cells (at protein level). Expressed at high levels in the kidney while a low level expression is seen in the brain. Within the brain, it is prominent in the hippocampus, cerebral cortex and olfactory bulb.</text>
</comment>
<comment type="tissue specificity">
    <molecule>Isoform 1</molecule>
    <text evidence="12">Brain, pancreas, kidney, liver, lung, retina, olfactory bulb, and spinal cord.</text>
</comment>
<comment type="tissue specificity">
    <molecule>Isoform 2</molecule>
    <text evidence="12">Brain, pancreas, kidney, liver, lung, retina, olfactory bulb, and spinal cord.</text>
</comment>
<comment type="tissue specificity">
    <molecule>Isoform 3</molecule>
    <text evidence="12">Pancreas, kidney, liver, lung and retina.</text>
</comment>
<comment type="tissue specificity">
    <molecule>Isoform 4</molecule>
    <text evidence="12">Brain, heart, pancreas, kidney, liver, lung, retina, olfactory bulb, and spinal cord.</text>
</comment>
<comment type="tissue specificity">
    <molecule>Isoform 5</molecule>
    <text evidence="11">Expressed at high levels in the liver and at low levels in the brain.</text>
</comment>
<comment type="developmental stage">
    <text evidence="14">At 10.5 days of development it is expressed throughout the embryo. Later in development (12.5 to 14.5 days of gestation), expression is progressively up-regulated in neurons of the brain and the spinal cord, in all cranial sensory ganglia and in the sympathetic dorsal root ganglia.</text>
</comment>
<comment type="PTM">
    <text evidence="3">N-glycosylated.</text>
</comment>
<comment type="similarity">
    <text evidence="19">Belongs to the chloride channel (TC 2.A.49) family. ClC-3/CLCN3 subfamily.</text>
</comment>
<evidence type="ECO:0000250" key="1"/>
<evidence type="ECO:0000250" key="2">
    <source>
        <dbReference type="UniProtKB" id="P35523"/>
    </source>
</evidence>
<evidence type="ECO:0000250" key="3">
    <source>
        <dbReference type="UniProtKB" id="P51790"/>
    </source>
</evidence>
<evidence type="ECO:0000250" key="4">
    <source>
        <dbReference type="UniProtKB" id="P51792"/>
    </source>
</evidence>
<evidence type="ECO:0000255" key="5"/>
<evidence type="ECO:0000255" key="6">
    <source>
        <dbReference type="PROSITE-ProRule" id="PRU00703"/>
    </source>
</evidence>
<evidence type="ECO:0000269" key="7">
    <source>
    </source>
</evidence>
<evidence type="ECO:0000269" key="8">
    <source>
    </source>
</evidence>
<evidence type="ECO:0000269" key="9">
    <source>
    </source>
</evidence>
<evidence type="ECO:0000269" key="10">
    <source>
    </source>
</evidence>
<evidence type="ECO:0000269" key="11">
    <source>
    </source>
</evidence>
<evidence type="ECO:0000269" key="12">
    <source>
    </source>
</evidence>
<evidence type="ECO:0000269" key="13">
    <source>
    </source>
</evidence>
<evidence type="ECO:0000269" key="14">
    <source>
    </source>
</evidence>
<evidence type="ECO:0000303" key="15">
    <source>
    </source>
</evidence>
<evidence type="ECO:0000303" key="16">
    <source>
    </source>
</evidence>
<evidence type="ECO:0000303" key="17">
    <source>
    </source>
</evidence>
<evidence type="ECO:0000303" key="18">
    <source ref="3"/>
</evidence>
<evidence type="ECO:0000305" key="19"/>
<evidence type="ECO:0000305" key="20">
    <source>
    </source>
</evidence>
<evidence type="ECO:0007829" key="21">
    <source>
        <dbReference type="PDB" id="8JGL"/>
    </source>
</evidence>
<evidence type="ECO:0007829" key="22">
    <source>
        <dbReference type="PDB" id="8JGV"/>
    </source>
</evidence>
<gene>
    <name type="primary">Clcn3</name>
    <name type="synonym">Clc3</name>
</gene>
<keyword id="KW-0002">3D-structure</keyword>
<keyword id="KW-0025">Alternative splicing</keyword>
<keyword id="KW-0050">Antiport</keyword>
<keyword id="KW-0067">ATP-binding</keyword>
<keyword id="KW-0129">CBS domain</keyword>
<keyword id="KW-1003">Cell membrane</keyword>
<keyword id="KW-0868">Chloride</keyword>
<keyword id="KW-0968">Cytoplasmic vesicle</keyword>
<keyword id="KW-0967">Endosome</keyword>
<keyword id="KW-0325">Glycoprotein</keyword>
<keyword id="KW-0406">Ion transport</keyword>
<keyword id="KW-0458">Lysosome</keyword>
<keyword id="KW-0472">Membrane</keyword>
<keyword id="KW-0547">Nucleotide-binding</keyword>
<keyword id="KW-1185">Reference proteome</keyword>
<keyword id="KW-0677">Repeat</keyword>
<keyword id="KW-0812">Transmembrane</keyword>
<keyword id="KW-1133">Transmembrane helix</keyword>
<keyword id="KW-0813">Transport</keyword>
<organism>
    <name type="scientific">Mus musculus</name>
    <name type="common">Mouse</name>
    <dbReference type="NCBI Taxonomy" id="10090"/>
    <lineage>
        <taxon>Eukaryota</taxon>
        <taxon>Metazoa</taxon>
        <taxon>Chordata</taxon>
        <taxon>Craniata</taxon>
        <taxon>Vertebrata</taxon>
        <taxon>Euteleostomi</taxon>
        <taxon>Mammalia</taxon>
        <taxon>Eutheria</taxon>
        <taxon>Euarchontoglires</taxon>
        <taxon>Glires</taxon>
        <taxon>Rodentia</taxon>
        <taxon>Myomorpha</taxon>
        <taxon>Muroidea</taxon>
        <taxon>Muridae</taxon>
        <taxon>Murinae</taxon>
        <taxon>Mus</taxon>
        <taxon>Mus</taxon>
    </lineage>
</organism>
<sequence>MESEQLFHRGYYRNSYNSITSASSDEELLDGAGAIMDFQTSEDDNLLDGDTAAGTHYTMTNGGSINSSTHLLDLLDEPIPGVGTYDDFHTIDWVREKCKDRERHRRINSKKKESAWEMTKSLYDAWSGWLVVTLTGLASGALAGLIDIAADWMTDLKEGICLSALWYNHEQCCWGSNETTFEERDKCPQWKTWAELIIGQAEGPGSYIMNYIMYIFWALSFAFLAVSLVKVFAPYACGSGIPEIKTILSGFIIRGYLGKWTLMIKTITLVLAVASGLSLGKEGPLVHVACCCGNIFSYLFPKYSTNEAKKREVLSAASAAGVSVAFGAPIGGVLFSLEEVSYYFPLKTLWRSFFAALVAAFVLRSINPFGNSRLVLFYVEYHTPWYLFELFPFILLGVFGGLWGAFFIRANIAWCRRRKSTKFGKYPVLEVIIVAAITAVIAFPNPYTRLNTSELIKELFTDCGPLESSSLCDYRNDMNASKIVDDIPDRPAGVGVYSAIWQLCLALIFKIIMTVFTFGIKVPSGLFIPSMAIGAIAGRIVGIAVEQLAYYHHDWFIFKEWCEVGADCITPGLYAMVGAAACLGGVTRMTVSLVVIVFELTGGLEYIVPLMAAVMTSKWVGDAFGREGIYEAHIRLNGYPFLDAKEEFTHTTLAADVMRPRRSDPPLAVLTQDNMTVDDIENMINETSYNGFPVIMSKESQRLVGFALRRDLTIAIESARKKQEGIVGSSRVCFAQHTPSLPAESPRPLKLRSILDMSPFTVTDHTPMEIVVDIFRKLGLRQCLVTHNGIVLGIITKKDILRHMAQTANQDPASIMFN</sequence>
<proteinExistence type="evidence at protein level"/>
<reference key="1">
    <citation type="journal article" date="1995" name="Genomics">
        <title>Characterization of a human and murine gene (CLCN3) sharing similarities to voltage-gated chloride channels and to a yeast integral membrane protein.</title>
        <authorList>
            <person name="Borsani G."/>
            <person name="Rugarli E.I."/>
            <person name="Taglialatela M."/>
            <person name="Wong C."/>
            <person name="Ballabio A."/>
        </authorList>
    </citation>
    <scope>NUCLEOTIDE SEQUENCE [MRNA] (ISOFORM 2)</scope>
    <scope>TISSUE SPECIFICITY</scope>
    <scope>DEVELOPMENTAL STAGE</scope>
    <source>
        <tissue>Thymus</tissue>
    </source>
</reference>
<reference key="2">
    <citation type="journal article" date="1998" name="Curr. Eye Res.">
        <title>Ion transporters and receptors in cDNA libraries from lens and cornea epithelia.</title>
        <authorList>
            <person name="Shepard A.R."/>
            <person name="Rae J.L."/>
        </authorList>
    </citation>
    <scope>NUCLEOTIDE SEQUENCE [MRNA] (ISOFORM 1)</scope>
    <source>
        <tissue>Lens epithelium</tissue>
    </source>
</reference>
<reference key="3">
    <citation type="submission" date="2001-01" db="EMBL/GenBank/DDBJ databases">
        <title>Diversity at the N- and C-termini for the predicted protein product of the mouse Clcn3 chloride channel gene is caused by alternative splicing.</title>
        <authorList>
            <person name="Schutte B.C."/>
            <person name="Zimmerman C.K."/>
            <person name="Swarz S."/>
            <person name="Malik M.I."/>
            <person name="Barna T.J."/>
            <person name="Lamb F.S."/>
        </authorList>
    </citation>
    <scope>NUCLEOTIDE SEQUENCE [GENOMIC DNA]</scope>
    <source>
        <strain>129/Sv</strain>
    </source>
</reference>
<reference key="4">
    <citation type="journal article" date="2005" name="Science">
        <title>The transcriptional landscape of the mammalian genome.</title>
        <authorList>
            <person name="Carninci P."/>
            <person name="Kasukawa T."/>
            <person name="Katayama S."/>
            <person name="Gough J."/>
            <person name="Frith M.C."/>
            <person name="Maeda N."/>
            <person name="Oyama R."/>
            <person name="Ravasi T."/>
            <person name="Lenhard B."/>
            <person name="Wells C."/>
            <person name="Kodzius R."/>
            <person name="Shimokawa K."/>
            <person name="Bajic V.B."/>
            <person name="Brenner S.E."/>
            <person name="Batalov S."/>
            <person name="Forrest A.R."/>
            <person name="Zavolan M."/>
            <person name="Davis M.J."/>
            <person name="Wilming L.G."/>
            <person name="Aidinis V."/>
            <person name="Allen J.E."/>
            <person name="Ambesi-Impiombato A."/>
            <person name="Apweiler R."/>
            <person name="Aturaliya R.N."/>
            <person name="Bailey T.L."/>
            <person name="Bansal M."/>
            <person name="Baxter L."/>
            <person name="Beisel K.W."/>
            <person name="Bersano T."/>
            <person name="Bono H."/>
            <person name="Chalk A.M."/>
            <person name="Chiu K.P."/>
            <person name="Choudhary V."/>
            <person name="Christoffels A."/>
            <person name="Clutterbuck D.R."/>
            <person name="Crowe M.L."/>
            <person name="Dalla E."/>
            <person name="Dalrymple B.P."/>
            <person name="de Bono B."/>
            <person name="Della Gatta G."/>
            <person name="di Bernardo D."/>
            <person name="Down T."/>
            <person name="Engstrom P."/>
            <person name="Fagiolini M."/>
            <person name="Faulkner G."/>
            <person name="Fletcher C.F."/>
            <person name="Fukushima T."/>
            <person name="Furuno M."/>
            <person name="Futaki S."/>
            <person name="Gariboldi M."/>
            <person name="Georgii-Hemming P."/>
            <person name="Gingeras T.R."/>
            <person name="Gojobori T."/>
            <person name="Green R.E."/>
            <person name="Gustincich S."/>
            <person name="Harbers M."/>
            <person name="Hayashi Y."/>
            <person name="Hensch T.K."/>
            <person name="Hirokawa N."/>
            <person name="Hill D."/>
            <person name="Huminiecki L."/>
            <person name="Iacono M."/>
            <person name="Ikeo K."/>
            <person name="Iwama A."/>
            <person name="Ishikawa T."/>
            <person name="Jakt M."/>
            <person name="Kanapin A."/>
            <person name="Katoh M."/>
            <person name="Kawasawa Y."/>
            <person name="Kelso J."/>
            <person name="Kitamura H."/>
            <person name="Kitano H."/>
            <person name="Kollias G."/>
            <person name="Krishnan S.P."/>
            <person name="Kruger A."/>
            <person name="Kummerfeld S.K."/>
            <person name="Kurochkin I.V."/>
            <person name="Lareau L.F."/>
            <person name="Lazarevic D."/>
            <person name="Lipovich L."/>
            <person name="Liu J."/>
            <person name="Liuni S."/>
            <person name="McWilliam S."/>
            <person name="Madan Babu M."/>
            <person name="Madera M."/>
            <person name="Marchionni L."/>
            <person name="Matsuda H."/>
            <person name="Matsuzawa S."/>
            <person name="Miki H."/>
            <person name="Mignone F."/>
            <person name="Miyake S."/>
            <person name="Morris K."/>
            <person name="Mottagui-Tabar S."/>
            <person name="Mulder N."/>
            <person name="Nakano N."/>
            <person name="Nakauchi H."/>
            <person name="Ng P."/>
            <person name="Nilsson R."/>
            <person name="Nishiguchi S."/>
            <person name="Nishikawa S."/>
            <person name="Nori F."/>
            <person name="Ohara O."/>
            <person name="Okazaki Y."/>
            <person name="Orlando V."/>
            <person name="Pang K.C."/>
            <person name="Pavan W.J."/>
            <person name="Pavesi G."/>
            <person name="Pesole G."/>
            <person name="Petrovsky N."/>
            <person name="Piazza S."/>
            <person name="Reed J."/>
            <person name="Reid J.F."/>
            <person name="Ring B.Z."/>
            <person name="Ringwald M."/>
            <person name="Rost B."/>
            <person name="Ruan Y."/>
            <person name="Salzberg S.L."/>
            <person name="Sandelin A."/>
            <person name="Schneider C."/>
            <person name="Schoenbach C."/>
            <person name="Sekiguchi K."/>
            <person name="Semple C.A."/>
            <person name="Seno S."/>
            <person name="Sessa L."/>
            <person name="Sheng Y."/>
            <person name="Shibata Y."/>
            <person name="Shimada H."/>
            <person name="Shimada K."/>
            <person name="Silva D."/>
            <person name="Sinclair B."/>
            <person name="Sperling S."/>
            <person name="Stupka E."/>
            <person name="Sugiura K."/>
            <person name="Sultana R."/>
            <person name="Takenaka Y."/>
            <person name="Taki K."/>
            <person name="Tammoja K."/>
            <person name="Tan S.L."/>
            <person name="Tang S."/>
            <person name="Taylor M.S."/>
            <person name="Tegner J."/>
            <person name="Teichmann S.A."/>
            <person name="Ueda H.R."/>
            <person name="van Nimwegen E."/>
            <person name="Verardo R."/>
            <person name="Wei C.L."/>
            <person name="Yagi K."/>
            <person name="Yamanishi H."/>
            <person name="Zabarovsky E."/>
            <person name="Zhu S."/>
            <person name="Zimmer A."/>
            <person name="Hide W."/>
            <person name="Bult C."/>
            <person name="Grimmond S.M."/>
            <person name="Teasdale R.D."/>
            <person name="Liu E.T."/>
            <person name="Brusic V."/>
            <person name="Quackenbush J."/>
            <person name="Wahlestedt C."/>
            <person name="Mattick J.S."/>
            <person name="Hume D.A."/>
            <person name="Kai C."/>
            <person name="Sasaki D."/>
            <person name="Tomaru Y."/>
            <person name="Fukuda S."/>
            <person name="Kanamori-Katayama M."/>
            <person name="Suzuki M."/>
            <person name="Aoki J."/>
            <person name="Arakawa T."/>
            <person name="Iida J."/>
            <person name="Imamura K."/>
            <person name="Itoh M."/>
            <person name="Kato T."/>
            <person name="Kawaji H."/>
            <person name="Kawagashira N."/>
            <person name="Kawashima T."/>
            <person name="Kojima M."/>
            <person name="Kondo S."/>
            <person name="Konno H."/>
            <person name="Nakano K."/>
            <person name="Ninomiya N."/>
            <person name="Nishio T."/>
            <person name="Okada M."/>
            <person name="Plessy C."/>
            <person name="Shibata K."/>
            <person name="Shiraki T."/>
            <person name="Suzuki S."/>
            <person name="Tagami M."/>
            <person name="Waki K."/>
            <person name="Watahiki A."/>
            <person name="Okamura-Oho Y."/>
            <person name="Suzuki H."/>
            <person name="Kawai J."/>
            <person name="Hayashizaki Y."/>
        </authorList>
    </citation>
    <scope>NUCLEOTIDE SEQUENCE [LARGE SCALE MRNA] (ISOFORMS 1 AND 3)</scope>
    <source>
        <strain>C57BL/6J</strain>
        <tissue>Bone</tissue>
        <tissue>Cerebellum</tissue>
    </source>
</reference>
<reference key="5">
    <citation type="journal article" date="2009" name="PLoS Biol.">
        <title>Lineage-specific biology revealed by a finished genome assembly of the mouse.</title>
        <authorList>
            <person name="Church D.M."/>
            <person name="Goodstadt L."/>
            <person name="Hillier L.W."/>
            <person name="Zody M.C."/>
            <person name="Goldstein S."/>
            <person name="She X."/>
            <person name="Bult C.J."/>
            <person name="Agarwala R."/>
            <person name="Cherry J.L."/>
            <person name="DiCuccio M."/>
            <person name="Hlavina W."/>
            <person name="Kapustin Y."/>
            <person name="Meric P."/>
            <person name="Maglott D."/>
            <person name="Birtle Z."/>
            <person name="Marques A.C."/>
            <person name="Graves T."/>
            <person name="Zhou S."/>
            <person name="Teague B."/>
            <person name="Potamousis K."/>
            <person name="Churas C."/>
            <person name="Place M."/>
            <person name="Herschleb J."/>
            <person name="Runnheim R."/>
            <person name="Forrest D."/>
            <person name="Amos-Landgraf J."/>
            <person name="Schwartz D.C."/>
            <person name="Cheng Z."/>
            <person name="Lindblad-Toh K."/>
            <person name="Eichler E.E."/>
            <person name="Ponting C.P."/>
        </authorList>
    </citation>
    <scope>NUCLEOTIDE SEQUENCE [LARGE SCALE GENOMIC DNA]</scope>
    <source>
        <strain>C57BL/6J</strain>
    </source>
</reference>
<reference key="6">
    <citation type="submission" date="2005-07" db="EMBL/GenBank/DDBJ databases">
        <authorList>
            <person name="Mural R.J."/>
            <person name="Adams M.D."/>
            <person name="Myers E.W."/>
            <person name="Smith H.O."/>
            <person name="Venter J.C."/>
        </authorList>
    </citation>
    <scope>NUCLEOTIDE SEQUENCE [LARGE SCALE GENOMIC DNA]</scope>
</reference>
<reference key="7">
    <citation type="journal article" date="2005" name="J. Biol. Chem.">
        <title>ClC-3 chloride channels facilitate endosomal acidification and chloride accumulation.</title>
        <authorList>
            <person name="Hara-Chikuma M."/>
            <person name="Yang B."/>
            <person name="Sonawane N.D."/>
            <person name="Sasaki S."/>
            <person name="Uchida S."/>
            <person name="Verkman A.S."/>
        </authorList>
    </citation>
    <scope>FUNCTION (ISOFORM 2)</scope>
</reference>
<reference key="8">
    <citation type="journal article" date="2006" name="J. Cell. Physiol.">
        <title>Intracellular localization of ClC chloride channels and their ability to form hetero-oligomers.</title>
        <authorList>
            <person name="Suzuki T."/>
            <person name="Rai T."/>
            <person name="Hayama A."/>
            <person name="Sohara E."/>
            <person name="Suda S."/>
            <person name="Itoh T."/>
            <person name="Sasaki S."/>
            <person name="Uchida S."/>
        </authorList>
    </citation>
    <scope>SUBCELLULAR LOCATION (ISOFORM 2)</scope>
</reference>
<reference key="9">
    <citation type="journal article" date="2008" name="J. Neurosci.">
        <title>Role of the vesicular chloride transporter ClC-3 in neuroendocrine tissue.</title>
        <authorList>
            <person name="Maritzen T."/>
            <person name="Keating D.J."/>
            <person name="Neagoe I."/>
            <person name="Zdebik A.A."/>
            <person name="Jentsch T.J."/>
        </authorList>
    </citation>
    <scope>FUNCTION</scope>
    <scope>TISSUE SPECIFICITY</scope>
    <scope>SUBCELLULAR LOCATION</scope>
</reference>
<reference key="10">
    <citation type="journal article" date="2014" name="Cell. Physiol. Biochem.">
        <title>A newly cloned ClC-3 isoform, ClC-3d, as well as ClC-3a mediates Cd-sensitive outwardly rectifying anion currents.</title>
        <authorList>
            <person name="Okada T."/>
            <person name="Akita T."/>
            <person name="Sato-Numata K."/>
            <person name="Islam M.R."/>
            <person name="Okada Y."/>
        </authorList>
    </citation>
    <scope>ALTERNATIVE SPLICING (ISOFORM 5)</scope>
    <scope>FUNCTION (ISOFORMS 2 AND 5)</scope>
    <scope>ACTIVITY REGULATION (ISOFORMS 2 AND 5)</scope>
    <scope>SUBCELLULAR LOCATION (ISOFORM 5)</scope>
    <scope>TISSUE SPECIFICITY (ISOFORM 5)</scope>
    <scope>MUTAGENESIS (ISOFORM 5)</scope>
</reference>
<reference key="11">
    <citation type="journal article" date="2015" name="J. Biol. Chem.">
        <title>Neuronal ClC-3 Splice Variants Differ in Subcellular Localizations, but Mediate Identical Transport Functions.</title>
        <authorList>
            <person name="Guzman R.E."/>
            <person name="Miranda-Laferte E."/>
            <person name="Franzen A."/>
            <person name="Fahlke C."/>
        </authorList>
    </citation>
    <scope>ALTERNATIVE SPLICING (ISOFORMS 1; 2; 3 AND 4)</scope>
    <scope>FUNCTION (ISOFORMS 1; 2 AND 4)</scope>
    <scope>SUBCELLULAR LOCATION (ISOFORMS 1; 2 AND 4)</scope>
    <scope>TISSUE SPECIFICITY (ISOFORMS 1; 2; 3 AND 4)</scope>
    <scope>DI-LEUCINE INTERNALIZATION MOTIF (ISOFORMS 1 AND 2)</scope>
    <scope>IP MOTIF (ISOFORM 4)</scope>
</reference>
<reference key="12">
    <citation type="journal article" date="2017" name="J. Biol. Chem.">
        <title>Preferential association with ClC-3 permits sorting of ClC-4 into endosomal compartments.</title>
        <authorList>
            <person name="Guzman R.E."/>
            <person name="Bungert-Pluemke S."/>
            <person name="Franzen A."/>
            <person name="Fahlke C."/>
        </authorList>
    </citation>
    <scope>FUNCTION (ISOFORM 2)</scope>
    <scope>SUBCELLULAR LOCATION (ISOFORMS 1; 2 AND 4)</scope>
    <scope>SUBUNIT (ISOFORM 1)</scope>
</reference>
<name>CLCN3_MOUSE</name>
<feature type="chain" id="PRO_0000094439" description="H(+)/Cl(-) exchange transporter 3">
    <location>
        <begin position="1"/>
        <end position="818"/>
    </location>
</feature>
<feature type="topological domain" description="Cytoplasmic" evidence="2">
    <location>
        <begin position="1"/>
        <end position="125"/>
    </location>
</feature>
<feature type="transmembrane region" description="Helical" evidence="2">
    <location>
        <begin position="126"/>
        <end position="163"/>
    </location>
</feature>
<feature type="transmembrane region" description="Helical" evidence="2">
    <location>
        <begin position="209"/>
        <end position="232"/>
    </location>
</feature>
<feature type="intramembrane region" description="Helical" evidence="2">
    <location>
        <begin position="241"/>
        <end position="248"/>
    </location>
</feature>
<feature type="transmembrane region" description="Helical" evidence="2">
    <location>
        <begin position="258"/>
        <end position="276"/>
    </location>
</feature>
<feature type="transmembrane region" description="Helical" evidence="2">
    <location>
        <begin position="282"/>
        <end position="301"/>
    </location>
</feature>
<feature type="intramembrane region" description="Helical" evidence="2">
    <location>
        <begin position="313"/>
        <end position="325"/>
    </location>
</feature>
<feature type="intramembrane region" description="Helical" evidence="2">
    <location>
        <begin position="329"/>
        <end position="337"/>
    </location>
</feature>
<feature type="transmembrane region" description="Helical" evidence="2">
    <location>
        <begin position="349"/>
        <end position="367"/>
    </location>
</feature>
<feature type="transmembrane region" description="Helical" evidence="2">
    <location>
        <begin position="391"/>
        <end position="416"/>
    </location>
</feature>
<feature type="transmembrane region" description="Helical" evidence="2">
    <location>
        <begin position="423"/>
        <end position="443"/>
    </location>
</feature>
<feature type="transmembrane region" description="Helical" evidence="2">
    <location>
        <begin position="500"/>
        <end position="520"/>
    </location>
</feature>
<feature type="transmembrane region" description="Helical" evidence="2">
    <location>
        <begin position="525"/>
        <end position="544"/>
    </location>
</feature>
<feature type="intramembrane region" description="Helical" evidence="2">
    <location>
        <begin position="572"/>
        <end position="586"/>
    </location>
</feature>
<feature type="intramembrane region" description="Helical" evidence="2">
    <location>
        <begin position="590"/>
        <end position="601"/>
    </location>
</feature>
<feature type="intramembrane region" description="Note=Loop between two helices" evidence="2">
    <location>
        <begin position="602"/>
        <end position="605"/>
    </location>
</feature>
<feature type="transmembrane region" description="Helical" evidence="2">
    <location>
        <begin position="606"/>
        <end position="624"/>
    </location>
</feature>
<feature type="topological domain" description="Cytoplasmic" evidence="2">
    <location>
        <begin position="625"/>
        <end position="818"/>
    </location>
</feature>
<feature type="domain" description="CBS 1" evidence="6">
    <location>
        <begin position="658"/>
        <end position="722"/>
    </location>
</feature>
<feature type="domain" description="CBS 2" evidence="6">
    <location>
        <begin position="755"/>
        <end position="812"/>
    </location>
</feature>
<feature type="short sequence motif" description="Di-leucine internalization motif; mediates targeting to late endosome and lysosome membranes" evidence="20">
    <location>
        <begin position="28"/>
        <end position="29"/>
    </location>
</feature>
<feature type="short sequence motif" description="Di-leucine internalization motif; mediates targeting to late endosome and lysosome membranes" evidence="20">
    <location>
        <begin position="46"/>
        <end position="47"/>
    </location>
</feature>
<feature type="short sequence motif" description="Di-leucine internalization motif; mediates targeting to late endosome and lysosome membranes" evidence="20">
    <location>
        <begin position="71"/>
        <end position="75"/>
    </location>
</feature>
<feature type="short sequence motif" description="Selectivity filter part_1" evidence="1">
    <location>
        <begin position="238"/>
        <end position="242"/>
    </location>
</feature>
<feature type="short sequence motif" description="Selectivity filter part_2" evidence="1">
    <location>
        <begin position="280"/>
        <end position="284"/>
    </location>
</feature>
<feature type="short sequence motif" description="Selectivity filter part_3" evidence="1">
    <location>
        <begin position="525"/>
        <end position="529"/>
    </location>
</feature>
<feature type="binding site" evidence="1">
    <location>
        <position position="239"/>
    </location>
    <ligand>
        <name>chloride</name>
        <dbReference type="ChEBI" id="CHEBI:17996"/>
    </ligand>
</feature>
<feature type="binding site" evidence="1">
    <location>
        <position position="527"/>
    </location>
    <ligand>
        <name>chloride</name>
        <dbReference type="ChEBI" id="CHEBI:17996"/>
    </ligand>
</feature>
<feature type="binding site" evidence="1">
    <location>
        <position position="630"/>
    </location>
    <ligand>
        <name>chloride</name>
        <dbReference type="ChEBI" id="CHEBI:17996"/>
    </ligand>
</feature>
<feature type="binding site" evidence="1">
    <location>
        <begin position="689"/>
        <end position="691"/>
    </location>
    <ligand>
        <name>ATP</name>
        <dbReference type="ChEBI" id="CHEBI:30616"/>
    </ligand>
</feature>
<feature type="binding site" evidence="1">
    <location>
        <begin position="796"/>
        <end position="799"/>
    </location>
    <ligand>
        <name>ATP</name>
        <dbReference type="ChEBI" id="CHEBI:30616"/>
    </ligand>
</feature>
<feature type="site" description="Mediates proton transfer from the outer aqueous phase to the interior of the protein; involved in linking H(+) and Cl(-) transport" evidence="1">
    <location>
        <position position="282"/>
    </location>
</feature>
<feature type="site" description="Mediates proton transfer from the protein to the inner aqueous phase" evidence="1">
    <location>
        <position position="339"/>
    </location>
</feature>
<feature type="glycosylation site" description="N-linked (GlcNAc...) asparagine" evidence="5">
    <location>
        <position position="177"/>
    </location>
</feature>
<feature type="glycosylation site" description="N-linked (GlcNAc...) asparagine" evidence="5">
    <location>
        <position position="451"/>
    </location>
</feature>
<feature type="glycosylation site" description="N-linked (GlcNAc...) asparagine" evidence="5">
    <location>
        <position position="479"/>
    </location>
</feature>
<feature type="splice variant" id="VSP_036899" description="In isoform 2 and isoform 5." evidence="15 16 17">
    <location>
        <begin position="1"/>
        <end position="58"/>
    </location>
</feature>
<feature type="splice variant" id="VSP_060627" description="In isoform 4." evidence="16">
    <original>MESEQLFHRGYYRNSYNSITSASSDEELLDGAGAIMDFQTSEDDNLLDGDTAA</original>
    <variation>MDASSDPYLPYDGGGDSIPLRELHKR</variation>
    <location>
        <begin position="1"/>
        <end position="53"/>
    </location>
</feature>
<feature type="splice variant" id="VSP_060628" description="In isoform 3 and isoform 5." evidence="15 16 18">
    <original>DILRHMAQTANQDPASIMFN</original>
    <variation>NILEHLEQLKQHVEPLTPPWHYNKKRYPPSYGPDGKPRPRFNNVQLSPVDEDREETEEEVRLLNSTIL</variation>
    <location>
        <begin position="799"/>
        <end position="818"/>
    </location>
</feature>
<feature type="sequence conflict" description="In Ref. 1; CAA55476, 2; AAB95162, 3; AAM89113, 4; BAE24568/BAE35298/BAE37002 and 6; EDL28642." evidence="19" ref="1 2 3 4 6">
    <original>IV</original>
    <variation>RL</variation>
    <location>
        <begin position="790"/>
        <end position="791"/>
    </location>
</feature>
<feature type="helix" evidence="22">
    <location>
        <begin position="93"/>
        <end position="111"/>
    </location>
</feature>
<feature type="helix" evidence="22">
    <location>
        <begin position="115"/>
        <end position="155"/>
    </location>
</feature>
<feature type="turn" evidence="22">
    <location>
        <begin position="156"/>
        <end position="158"/>
    </location>
</feature>
<feature type="strand" evidence="22">
    <location>
        <begin position="159"/>
        <end position="163"/>
    </location>
</feature>
<feature type="helix" evidence="22">
    <location>
        <begin position="169"/>
        <end position="173"/>
    </location>
</feature>
<feature type="strand" evidence="22">
    <location>
        <begin position="188"/>
        <end position="192"/>
    </location>
</feature>
<feature type="helix" evidence="22">
    <location>
        <begin position="193"/>
        <end position="197"/>
    </location>
</feature>
<feature type="strand" evidence="22">
    <location>
        <begin position="201"/>
        <end position="203"/>
    </location>
</feature>
<feature type="helix" evidence="22">
    <location>
        <begin position="204"/>
        <end position="232"/>
    </location>
</feature>
<feature type="helix" evidence="22">
    <location>
        <begin position="234"/>
        <end position="236"/>
    </location>
</feature>
<feature type="helix" evidence="22">
    <location>
        <begin position="241"/>
        <end position="248"/>
    </location>
</feature>
<feature type="turn" evidence="22">
    <location>
        <begin position="254"/>
        <end position="257"/>
    </location>
</feature>
<feature type="helix" evidence="22">
    <location>
        <begin position="259"/>
        <end position="274"/>
    </location>
</feature>
<feature type="strand" evidence="21">
    <location>
        <begin position="281"/>
        <end position="283"/>
    </location>
</feature>
<feature type="helix" evidence="22">
    <location>
        <begin position="284"/>
        <end position="297"/>
    </location>
</feature>
<feature type="helix" evidence="22">
    <location>
        <begin position="301"/>
        <end position="304"/>
    </location>
</feature>
<feature type="helix" evidence="22">
    <location>
        <begin position="307"/>
        <end position="326"/>
    </location>
</feature>
<feature type="helix" evidence="22">
    <location>
        <begin position="329"/>
        <end position="338"/>
    </location>
</feature>
<feature type="helix" evidence="22">
    <location>
        <begin position="347"/>
        <end position="365"/>
    </location>
</feature>
<feature type="strand" evidence="22">
    <location>
        <begin position="373"/>
        <end position="375"/>
    </location>
</feature>
<feature type="helix" evidence="22">
    <location>
        <begin position="387"/>
        <end position="389"/>
    </location>
</feature>
<feature type="helix" evidence="22">
    <location>
        <begin position="390"/>
        <end position="419"/>
    </location>
</feature>
<feature type="helix" evidence="22">
    <location>
        <begin position="422"/>
        <end position="425"/>
    </location>
</feature>
<feature type="helix" evidence="22">
    <location>
        <begin position="427"/>
        <end position="442"/>
    </location>
</feature>
<feature type="strand" evidence="22">
    <location>
        <begin position="443"/>
        <end position="445"/>
    </location>
</feature>
<feature type="helix" evidence="22">
    <location>
        <begin position="446"/>
        <end position="449"/>
    </location>
</feature>
<feature type="helix" evidence="22">
    <location>
        <begin position="452"/>
        <end position="460"/>
    </location>
</feature>
<feature type="helix" evidence="22">
    <location>
        <begin position="470"/>
        <end position="472"/>
    </location>
</feature>
<feature type="helix" evidence="22">
    <location>
        <begin position="494"/>
        <end position="517"/>
    </location>
</feature>
<feature type="strand" evidence="22">
    <location>
        <begin position="518"/>
        <end position="522"/>
    </location>
</feature>
<feature type="helix" evidence="22">
    <location>
        <begin position="527"/>
        <end position="551"/>
    </location>
</feature>
<feature type="turn" evidence="21">
    <location>
        <begin position="552"/>
        <end position="554"/>
    </location>
</feature>
<feature type="helix" evidence="22">
    <location>
        <begin position="556"/>
        <end position="560"/>
    </location>
</feature>
<feature type="helix" evidence="22">
    <location>
        <begin position="571"/>
        <end position="587"/>
    </location>
</feature>
<feature type="helix" evidence="22">
    <location>
        <begin position="591"/>
        <end position="601"/>
    </location>
</feature>
<feature type="helix" evidence="22">
    <location>
        <begin position="607"/>
        <end position="622"/>
    </location>
</feature>
<feature type="helix" evidence="22">
    <location>
        <begin position="629"/>
        <end position="635"/>
    </location>
</feature>
<feature type="turn" evidence="22">
    <location>
        <begin position="636"/>
        <end position="638"/>
    </location>
</feature>
<feature type="strand" evidence="22">
    <location>
        <begin position="644"/>
        <end position="646"/>
    </location>
</feature>
<feature type="helix" evidence="22">
    <location>
        <begin position="654"/>
        <end position="657"/>
    </location>
</feature>
<feature type="strand" evidence="22">
    <location>
        <begin position="662"/>
        <end position="664"/>
    </location>
</feature>
<feature type="strand" evidence="22">
    <location>
        <begin position="670"/>
        <end position="674"/>
    </location>
</feature>
<feature type="helix" evidence="22">
    <location>
        <begin position="677"/>
        <end position="686"/>
    </location>
</feature>
<feature type="strand" evidence="22">
    <location>
        <begin position="690"/>
        <end position="696"/>
    </location>
</feature>
<feature type="turn" evidence="22">
    <location>
        <begin position="698"/>
        <end position="700"/>
    </location>
</feature>
<feature type="strand" evidence="22">
    <location>
        <begin position="703"/>
        <end position="708"/>
    </location>
</feature>
<feature type="helix" evidence="22">
    <location>
        <begin position="709"/>
        <end position="720"/>
    </location>
</feature>
<feature type="turn" evidence="22">
    <location>
        <begin position="752"/>
        <end position="754"/>
    </location>
</feature>
<feature type="strand" evidence="22">
    <location>
        <begin position="761"/>
        <end position="763"/>
    </location>
</feature>
<feature type="helix" evidence="22">
    <location>
        <begin position="768"/>
        <end position="778"/>
    </location>
</feature>
<feature type="strand" evidence="22">
    <location>
        <begin position="784"/>
        <end position="787"/>
    </location>
</feature>
<feature type="strand" evidence="21">
    <location>
        <begin position="790"/>
        <end position="796"/>
    </location>
</feature>
<feature type="helix" evidence="22">
    <location>
        <begin position="797"/>
        <end position="804"/>
    </location>
</feature>
<feature type="short sequence motif" description="Di-leucine internalization motif; mediates targeting to late endosome and lysosome membranes" evidence="12">
    <location sequence="P51791-2">
        <begin position="13"/>
        <end position="17"/>
    </location>
</feature>
<feature type="short sequence motif" description="IP motif; mediates targeting to recycling endosomes" evidence="12">
    <location sequence="P51791-4">
        <begin position="18"/>
        <end position="19"/>
    </location>
</feature>
<feature type="mutagenesis site" description="Abolishes outwardly-rectifying currents." evidence="11">
    <original>E</original>
    <variation>A</variation>
    <location sequence="P51791-5">
        <position position="224"/>
    </location>
</feature>
<protein>
    <recommendedName>
        <fullName>H(+)/Cl(-) exchange transporter 3</fullName>
    </recommendedName>
    <alternativeName>
        <fullName>Chloride channel protein 3</fullName>
        <shortName>ClC-3</shortName>
    </alternativeName>
    <alternativeName>
        <fullName>Chloride transporter ClC-3</fullName>
    </alternativeName>
</protein>
<accession>P51791</accession>
<accession>Q3TF45</accession>
<accession>Q8K4X0</accession>
<accession>Q8K4X1</accession>
<dbReference type="EMBL" id="X78874">
    <property type="protein sequence ID" value="CAA55476.1"/>
    <property type="molecule type" value="mRNA"/>
</dbReference>
<dbReference type="EMBL" id="AF029347">
    <property type="protein sequence ID" value="AAB95162.1"/>
    <property type="molecule type" value="mRNA"/>
</dbReference>
<dbReference type="EMBL" id="AF347688">
    <property type="protein sequence ID" value="AAM89113.1"/>
    <property type="molecule type" value="Genomic_DNA"/>
</dbReference>
<dbReference type="EMBL" id="AF347682">
    <property type="protein sequence ID" value="AAM89113.1"/>
    <property type="status" value="JOINED"/>
    <property type="molecule type" value="Genomic_DNA"/>
</dbReference>
<dbReference type="EMBL" id="AF347683">
    <property type="protein sequence ID" value="AAM89113.1"/>
    <property type="status" value="JOINED"/>
    <property type="molecule type" value="Genomic_DNA"/>
</dbReference>
<dbReference type="EMBL" id="AF347684">
    <property type="protein sequence ID" value="AAM89113.1"/>
    <property type="status" value="JOINED"/>
    <property type="molecule type" value="Genomic_DNA"/>
</dbReference>
<dbReference type="EMBL" id="AF347685">
    <property type="protein sequence ID" value="AAM89113.1"/>
    <property type="status" value="JOINED"/>
    <property type="molecule type" value="Genomic_DNA"/>
</dbReference>
<dbReference type="EMBL" id="AF347686">
    <property type="protein sequence ID" value="AAM89113.1"/>
    <property type="status" value="JOINED"/>
    <property type="molecule type" value="Genomic_DNA"/>
</dbReference>
<dbReference type="EMBL" id="AH011751">
    <property type="protein sequence ID" value="AAM89117.1"/>
    <property type="molecule type" value="Genomic_DNA"/>
</dbReference>
<dbReference type="EMBL" id="AF347682">
    <property type="protein sequence ID" value="AAM89117.1"/>
    <property type="status" value="JOINED"/>
    <property type="molecule type" value="Genomic_DNA"/>
</dbReference>
<dbReference type="EMBL" id="AF347683">
    <property type="protein sequence ID" value="AAM89117.1"/>
    <property type="status" value="JOINED"/>
    <property type="molecule type" value="Genomic_DNA"/>
</dbReference>
<dbReference type="EMBL" id="AF347684">
    <property type="protein sequence ID" value="AAM89117.1"/>
    <property type="status" value="JOINED"/>
    <property type="molecule type" value="Genomic_DNA"/>
</dbReference>
<dbReference type="EMBL" id="AF347685">
    <property type="protein sequence ID" value="AAM89117.1"/>
    <property type="status" value="JOINED"/>
    <property type="molecule type" value="Genomic_DNA"/>
</dbReference>
<dbReference type="EMBL" id="AF347686">
    <property type="protein sequence ID" value="AAM89117.1"/>
    <property type="status" value="JOINED"/>
    <property type="molecule type" value="Genomic_DNA"/>
</dbReference>
<dbReference type="EMBL" id="AF347687">
    <property type="protein sequence ID" value="AAM89117.1"/>
    <property type="status" value="JOINED"/>
    <property type="molecule type" value="Genomic_DNA"/>
</dbReference>
<dbReference type="EMBL" id="AK141136">
    <property type="protein sequence ID" value="BAE24568.1"/>
    <property type="molecule type" value="mRNA"/>
</dbReference>
<dbReference type="EMBL" id="AK159698">
    <property type="protein sequence ID" value="BAE35298.1"/>
    <property type="molecule type" value="mRNA"/>
</dbReference>
<dbReference type="EMBL" id="AK162639">
    <property type="protein sequence ID" value="BAE37002.1"/>
    <property type="molecule type" value="mRNA"/>
</dbReference>
<dbReference type="EMBL" id="AK150688">
    <property type="protein sequence ID" value="BAE29767.1"/>
    <property type="molecule type" value="mRNA"/>
</dbReference>
<dbReference type="EMBL" id="AK169297">
    <property type="protein sequence ID" value="BAE41053.1"/>
    <property type="molecule type" value="mRNA"/>
</dbReference>
<dbReference type="EMBL" id="AC114920">
    <property type="status" value="NOT_ANNOTATED_CDS"/>
    <property type="molecule type" value="Genomic_DNA"/>
</dbReference>
<dbReference type="EMBL" id="CH466569">
    <property type="protein sequence ID" value="EDL28642.1"/>
    <property type="molecule type" value="Genomic_DNA"/>
</dbReference>
<dbReference type="CCDS" id="CCDS22322.1">
    <molecule id="P51791-4"/>
</dbReference>
<dbReference type="CCDS" id="CCDS52555.1">
    <molecule id="P51791-3"/>
</dbReference>
<dbReference type="PIR" id="I48295">
    <property type="entry name" value="S55473"/>
</dbReference>
<dbReference type="RefSeq" id="NP_001403662.1">
    <molecule id="P51791-5"/>
    <property type="nucleotide sequence ID" value="NM_001416733.1"/>
</dbReference>
<dbReference type="RefSeq" id="NP_031737.1">
    <property type="nucleotide sequence ID" value="NM_007711.3"/>
</dbReference>
<dbReference type="RefSeq" id="NP_776298.1">
    <property type="nucleotide sequence ID" value="NM_173873.1"/>
</dbReference>
<dbReference type="RefSeq" id="NP_776299.1">
    <molecule id="P51791-3"/>
    <property type="nucleotide sequence ID" value="NM_173874.2"/>
</dbReference>
<dbReference type="RefSeq" id="XP_006509323.1">
    <property type="nucleotide sequence ID" value="XM_006509260.2"/>
</dbReference>
<dbReference type="RefSeq" id="XP_017168041.1">
    <molecule id="P51791-5"/>
    <property type="nucleotide sequence ID" value="XM_017312552.3"/>
</dbReference>
<dbReference type="RefSeq" id="XP_036009633.1">
    <molecule id="P51791-5"/>
    <property type="nucleotide sequence ID" value="XM_036153740.1"/>
</dbReference>
<dbReference type="PDB" id="8JEV">
    <property type="method" value="EM"/>
    <property type="resolution" value="3.06 A"/>
    <property type="chains" value="A/B=1-818"/>
</dbReference>
<dbReference type="PDB" id="8JGJ">
    <property type="method" value="EM"/>
    <property type="resolution" value="3.30 A"/>
    <property type="chains" value="A/B=1-818"/>
</dbReference>
<dbReference type="PDB" id="8JGK">
    <property type="method" value="EM"/>
    <property type="resolution" value="4.04 A"/>
    <property type="chains" value="A/B=1-818"/>
</dbReference>
<dbReference type="PDB" id="8JGL">
    <property type="method" value="EM"/>
    <property type="resolution" value="3.14 A"/>
    <property type="chains" value="A/B=1-818"/>
</dbReference>
<dbReference type="PDB" id="8JGS">
    <property type="method" value="EM"/>
    <property type="resolution" value="3.96 A"/>
    <property type="chains" value="A/B=1-818"/>
</dbReference>
<dbReference type="PDB" id="8JGV">
    <property type="method" value="EM"/>
    <property type="resolution" value="2.98 A"/>
    <property type="chains" value="A/B=1-818"/>
</dbReference>
<dbReference type="PDBsum" id="8JEV"/>
<dbReference type="PDBsum" id="8JGJ"/>
<dbReference type="PDBsum" id="8JGK"/>
<dbReference type="PDBsum" id="8JGL"/>
<dbReference type="PDBsum" id="8JGS"/>
<dbReference type="PDBsum" id="8JGV"/>
<dbReference type="EMDB" id="EMD-36200"/>
<dbReference type="EMDB" id="EMD-36236"/>
<dbReference type="EMDB" id="EMD-36237"/>
<dbReference type="EMDB" id="EMD-36238"/>
<dbReference type="EMDB" id="EMD-36245"/>
<dbReference type="EMDB" id="EMD-36246"/>
<dbReference type="SMR" id="P51791"/>
<dbReference type="FunCoup" id="P51791">
    <property type="interactions" value="2289"/>
</dbReference>
<dbReference type="STRING" id="10090.ENSMUSP00000004430"/>
<dbReference type="GlyCosmos" id="P51791">
    <property type="glycosylation" value="3 sites, No reported glycans"/>
</dbReference>
<dbReference type="GlyGen" id="P51791">
    <property type="glycosylation" value="3 sites"/>
</dbReference>
<dbReference type="iPTMnet" id="P51791"/>
<dbReference type="PhosphoSitePlus" id="P51791"/>
<dbReference type="PaxDb" id="10090-ENSMUSP00000004430"/>
<dbReference type="PeptideAtlas" id="P51791"/>
<dbReference type="ProteomicsDB" id="283574">
    <molecule id="P51791-1"/>
</dbReference>
<dbReference type="ProteomicsDB" id="283575">
    <molecule id="P51791-2"/>
</dbReference>
<dbReference type="ProteomicsDB" id="332668"/>
<dbReference type="ABCD" id="P51791">
    <property type="antibodies" value="1 sequenced antibody"/>
</dbReference>
<dbReference type="Antibodypedia" id="28481">
    <property type="antibodies" value="247 antibodies from 22 providers"/>
</dbReference>
<dbReference type="DNASU" id="12725"/>
<dbReference type="Ensembl" id="ENSMUST00000004430.14">
    <molecule id="P51791-3"/>
    <property type="protein sequence ID" value="ENSMUSP00000004430.8"/>
    <property type="gene ID" value="ENSMUSG00000004319.16"/>
</dbReference>
<dbReference type="GeneID" id="12725"/>
<dbReference type="KEGG" id="mmu:12725"/>
<dbReference type="UCSC" id="uc009ltl.2">
    <molecule id="P51791-1"/>
    <property type="organism name" value="mouse"/>
</dbReference>
<dbReference type="UCSC" id="uc009ltm.2">
    <property type="organism name" value="mouse"/>
</dbReference>
<dbReference type="AGR" id="MGI:103555"/>
<dbReference type="CTD" id="1182"/>
<dbReference type="MGI" id="MGI:103555">
    <property type="gene designation" value="Clcn3"/>
</dbReference>
<dbReference type="VEuPathDB" id="HostDB:ENSMUSG00000004319"/>
<dbReference type="eggNOG" id="KOG0475">
    <property type="taxonomic scope" value="Eukaryota"/>
</dbReference>
<dbReference type="GeneTree" id="ENSGT00940000153763"/>
<dbReference type="HOGENOM" id="CLU_003181_2_1_1"/>
<dbReference type="InParanoid" id="P51791"/>
<dbReference type="OrthoDB" id="44123at9989"/>
<dbReference type="TreeFam" id="TF313867"/>
<dbReference type="BioGRID-ORCS" id="12725">
    <property type="hits" value="3 hits in 79 CRISPR screens"/>
</dbReference>
<dbReference type="ChiTaRS" id="Clcn3">
    <property type="organism name" value="mouse"/>
</dbReference>
<dbReference type="PRO" id="PR:P51791"/>
<dbReference type="Proteomes" id="UP000000589">
    <property type="component" value="Chromosome 8"/>
</dbReference>
<dbReference type="RNAct" id="P51791">
    <property type="molecule type" value="protein"/>
</dbReference>
<dbReference type="Bgee" id="ENSMUSG00000004319">
    <property type="expression patterns" value="Expressed in rostral migratory stream and 268 other cell types or tissues"/>
</dbReference>
<dbReference type="ExpressionAtlas" id="P51791">
    <property type="expression patterns" value="baseline and differential"/>
</dbReference>
<dbReference type="GO" id="GO:0043679">
    <property type="term" value="C:axon terminus"/>
    <property type="evidence" value="ECO:0000314"/>
    <property type="project" value="MGI"/>
</dbReference>
<dbReference type="GO" id="GO:0005769">
    <property type="term" value="C:early endosome"/>
    <property type="evidence" value="ECO:0000250"/>
    <property type="project" value="UniProtKB"/>
</dbReference>
<dbReference type="GO" id="GO:0031901">
    <property type="term" value="C:early endosome membrane"/>
    <property type="evidence" value="ECO:0000314"/>
    <property type="project" value="UniProtKB"/>
</dbReference>
<dbReference type="GO" id="GO:0005768">
    <property type="term" value="C:endosome"/>
    <property type="evidence" value="ECO:0000314"/>
    <property type="project" value="MGI"/>
</dbReference>
<dbReference type="GO" id="GO:0010008">
    <property type="term" value="C:endosome membrane"/>
    <property type="evidence" value="ECO:0000314"/>
    <property type="project" value="UniProtKB"/>
</dbReference>
<dbReference type="GO" id="GO:0009897">
    <property type="term" value="C:external side of plasma membrane"/>
    <property type="evidence" value="ECO:0007669"/>
    <property type="project" value="Ensembl"/>
</dbReference>
<dbReference type="GO" id="GO:0098982">
    <property type="term" value="C:GABA-ergic synapse"/>
    <property type="evidence" value="ECO:0007669"/>
    <property type="project" value="Ensembl"/>
</dbReference>
<dbReference type="GO" id="GO:0098978">
    <property type="term" value="C:glutamatergic synapse"/>
    <property type="evidence" value="ECO:0000314"/>
    <property type="project" value="SynGO"/>
</dbReference>
<dbReference type="GO" id="GO:0005794">
    <property type="term" value="C:Golgi apparatus"/>
    <property type="evidence" value="ECO:0000250"/>
    <property type="project" value="UniProtKB"/>
</dbReference>
<dbReference type="GO" id="GO:0060077">
    <property type="term" value="C:inhibitory synapse"/>
    <property type="evidence" value="ECO:0000266"/>
    <property type="project" value="MGI"/>
</dbReference>
<dbReference type="GO" id="GO:0005770">
    <property type="term" value="C:late endosome"/>
    <property type="evidence" value="ECO:0000250"/>
    <property type="project" value="UniProtKB"/>
</dbReference>
<dbReference type="GO" id="GO:0031902">
    <property type="term" value="C:late endosome membrane"/>
    <property type="evidence" value="ECO:0000314"/>
    <property type="project" value="UniProtKB"/>
</dbReference>
<dbReference type="GO" id="GO:0005765">
    <property type="term" value="C:lysosomal membrane"/>
    <property type="evidence" value="ECO:0000314"/>
    <property type="project" value="UniProtKB"/>
</dbReference>
<dbReference type="GO" id="GO:0045335">
    <property type="term" value="C:phagocytic vesicle"/>
    <property type="evidence" value="ECO:0007669"/>
    <property type="project" value="Ensembl"/>
</dbReference>
<dbReference type="GO" id="GO:0005886">
    <property type="term" value="C:plasma membrane"/>
    <property type="evidence" value="ECO:0000314"/>
    <property type="project" value="UniProtKB"/>
</dbReference>
<dbReference type="GO" id="GO:0055037">
    <property type="term" value="C:recycling endosome"/>
    <property type="evidence" value="ECO:0000314"/>
    <property type="project" value="UniProtKB"/>
</dbReference>
<dbReference type="GO" id="GO:0055038">
    <property type="term" value="C:recycling endosome membrane"/>
    <property type="evidence" value="ECO:0000314"/>
    <property type="project" value="UniProtKB"/>
</dbReference>
<dbReference type="GO" id="GO:0042581">
    <property type="term" value="C:specific granule"/>
    <property type="evidence" value="ECO:0007669"/>
    <property type="project" value="Ensembl"/>
</dbReference>
<dbReference type="GO" id="GO:0008021">
    <property type="term" value="C:synaptic vesicle"/>
    <property type="evidence" value="ECO:0000314"/>
    <property type="project" value="MGI"/>
</dbReference>
<dbReference type="GO" id="GO:0030672">
    <property type="term" value="C:synaptic vesicle membrane"/>
    <property type="evidence" value="ECO:0007669"/>
    <property type="project" value="Ensembl"/>
</dbReference>
<dbReference type="GO" id="GO:0012506">
    <property type="term" value="C:vesicle membrane"/>
    <property type="evidence" value="ECO:0000250"/>
    <property type="project" value="UniProtKB"/>
</dbReference>
<dbReference type="GO" id="GO:0015297">
    <property type="term" value="F:antiporter activity"/>
    <property type="evidence" value="ECO:0000314"/>
    <property type="project" value="UniProtKB"/>
</dbReference>
<dbReference type="GO" id="GO:0005524">
    <property type="term" value="F:ATP binding"/>
    <property type="evidence" value="ECO:0007669"/>
    <property type="project" value="UniProtKB-KW"/>
</dbReference>
<dbReference type="GO" id="GO:0062158">
    <property type="term" value="F:chloride:proton antiporter activity"/>
    <property type="evidence" value="ECO:0007669"/>
    <property type="project" value="InterPro"/>
</dbReference>
<dbReference type="GO" id="GO:0030165">
    <property type="term" value="F:PDZ domain binding"/>
    <property type="evidence" value="ECO:0000250"/>
    <property type="project" value="UniProtKB"/>
</dbReference>
<dbReference type="GO" id="GO:0005247">
    <property type="term" value="F:voltage-gated chloride channel activity"/>
    <property type="evidence" value="ECO:0000250"/>
    <property type="project" value="UniProtKB"/>
</dbReference>
<dbReference type="GO" id="GO:0072320">
    <property type="term" value="F:volume-sensitive chloride channel activity"/>
    <property type="evidence" value="ECO:0007669"/>
    <property type="project" value="Ensembl"/>
</dbReference>
<dbReference type="GO" id="GO:0008344">
    <property type="term" value="P:adult locomotory behavior"/>
    <property type="evidence" value="ECO:0000315"/>
    <property type="project" value="MGI"/>
</dbReference>
<dbReference type="GO" id="GO:0045794">
    <property type="term" value="P:negative regulation of cell volume"/>
    <property type="evidence" value="ECO:0007669"/>
    <property type="project" value="Ensembl"/>
</dbReference>
<dbReference type="GO" id="GO:0070050">
    <property type="term" value="P:neuron cellular homeostasis"/>
    <property type="evidence" value="ECO:0000315"/>
    <property type="project" value="MGI"/>
</dbReference>
<dbReference type="GO" id="GO:0006911">
    <property type="term" value="P:phagocytosis, engulfment"/>
    <property type="evidence" value="ECO:0000315"/>
    <property type="project" value="MGI"/>
</dbReference>
<dbReference type="GO" id="GO:0045494">
    <property type="term" value="P:photoreceptor cell maintenance"/>
    <property type="evidence" value="ECO:0000315"/>
    <property type="project" value="MGI"/>
</dbReference>
<dbReference type="GO" id="GO:1903428">
    <property type="term" value="P:positive regulation of reactive oxygen species biosynthetic process"/>
    <property type="evidence" value="ECO:0000315"/>
    <property type="project" value="MGI"/>
</dbReference>
<dbReference type="GO" id="GO:0051932">
    <property type="term" value="P:synaptic transmission, GABAergic"/>
    <property type="evidence" value="ECO:0000315"/>
    <property type="project" value="MGI"/>
</dbReference>
<dbReference type="GO" id="GO:0035249">
    <property type="term" value="P:synaptic transmission, glutamatergic"/>
    <property type="evidence" value="ECO:0000315"/>
    <property type="project" value="MGI"/>
</dbReference>
<dbReference type="GO" id="GO:0097401">
    <property type="term" value="P:synaptic vesicle lumen acidification"/>
    <property type="evidence" value="ECO:0000314"/>
    <property type="project" value="SynGO"/>
</dbReference>
<dbReference type="CDD" id="cd04591">
    <property type="entry name" value="CBS_pair_voltage-gated_CLC_euk_bac"/>
    <property type="match status" value="1"/>
</dbReference>
<dbReference type="CDD" id="cd03684">
    <property type="entry name" value="ClC_3_like"/>
    <property type="match status" value="1"/>
</dbReference>
<dbReference type="FunFam" id="3.90.1280.20:FF:000001">
    <property type="entry name" value="Chloride channel protein"/>
    <property type="match status" value="1"/>
</dbReference>
<dbReference type="FunFam" id="3.90.1280.20:FF:000002">
    <property type="entry name" value="Chloride channel protein"/>
    <property type="match status" value="1"/>
</dbReference>
<dbReference type="Gene3D" id="3.90.1280.20">
    <property type="match status" value="2"/>
</dbReference>
<dbReference type="Gene3D" id="1.10.3080.10">
    <property type="entry name" value="Clc chloride channel"/>
    <property type="match status" value="1"/>
</dbReference>
<dbReference type="InterPro" id="IPR000644">
    <property type="entry name" value="CBS_dom"/>
</dbReference>
<dbReference type="InterPro" id="IPR046342">
    <property type="entry name" value="CBS_dom_sf"/>
</dbReference>
<dbReference type="InterPro" id="IPR014743">
    <property type="entry name" value="Cl-channel_core"/>
</dbReference>
<dbReference type="InterPro" id="IPR001807">
    <property type="entry name" value="ClC"/>
</dbReference>
<dbReference type="InterPro" id="IPR002245">
    <property type="entry name" value="ClC3"/>
</dbReference>
<dbReference type="PANTHER" id="PTHR45711">
    <property type="entry name" value="CHLORIDE CHANNEL PROTEIN"/>
    <property type="match status" value="1"/>
</dbReference>
<dbReference type="PANTHER" id="PTHR45711:SF8">
    <property type="entry name" value="H(+)_CL(-) EXCHANGE TRANSPORTER 3"/>
    <property type="match status" value="1"/>
</dbReference>
<dbReference type="Pfam" id="PF00571">
    <property type="entry name" value="CBS"/>
    <property type="match status" value="1"/>
</dbReference>
<dbReference type="Pfam" id="PF00654">
    <property type="entry name" value="Voltage_CLC"/>
    <property type="match status" value="1"/>
</dbReference>
<dbReference type="PRINTS" id="PR00762">
    <property type="entry name" value="CLCHANNEL"/>
</dbReference>
<dbReference type="PRINTS" id="PR01114">
    <property type="entry name" value="CLCHANNEL3"/>
</dbReference>
<dbReference type="SMART" id="SM00116">
    <property type="entry name" value="CBS"/>
    <property type="match status" value="2"/>
</dbReference>
<dbReference type="SUPFAM" id="SSF54631">
    <property type="entry name" value="CBS-domain pair"/>
    <property type="match status" value="1"/>
</dbReference>
<dbReference type="SUPFAM" id="SSF81340">
    <property type="entry name" value="Clc chloride channel"/>
    <property type="match status" value="1"/>
</dbReference>
<dbReference type="PROSITE" id="PS51371">
    <property type="entry name" value="CBS"/>
    <property type="match status" value="2"/>
</dbReference>